<comment type="function">
    <text evidence="1 12">Transcription coactivator that associates with the serum response factor (SRF) transcription factor to control expression of genes regulating the cytoskeleton during development, morphogenesis and cell migration (PubMed:26224645). The SRF-MRTFA complex activity responds to Rho GTPase-induced changes in cellular globular actin (G-actin) concentration, thereby coupling cytoskeletal gene expression to cytoskeletal dynamics. MRTFA binds G-actin via its RPEL repeats, regulating activity of the MRTFA-SRF complex. Activity is also regulated by filamentous actin (F-actin) in the nucleus.</text>
</comment>
<comment type="subunit">
    <text evidence="1 7 10">Interacts with SRF, forming the SRF-MRTFA nuclear complex which binds the 5'-CArG-3' consensus motif (CArG box) on DNA via SRF (PubMed:14565952, PubMed:19350017). Interacts (via RPEL repeats) with globular actin (G-actin), thereby regulating its subcellular location and activity of the complex formed with SRF (PubMed:19350017). Either forms a trivalent (by binding three G-actin monomers) or pentavalent (by binding five G-actin monomers) complex with G-actin (By similarity). Forms a nuclear ternary complex with SCAI and SRF, leading to suppress MRTFA-induced SRF transcriptional activity (PubMed:19350017). Interacts with beta-actin (ACTB); interaction with ACTB prevents interaction with SCAI (By similarity). Interacts with MRTFB (PubMed:14565952).</text>
</comment>
<comment type="interaction">
    <interactant intactId="EBI-493122">
        <id>Q969V6</id>
    </interactant>
    <interactant intactId="EBI-493034">
        <id>P11831</id>
        <label>SRF</label>
    </interactant>
    <organismsDiffer>false</organismsDiffer>
    <experiments>2</experiments>
</comment>
<comment type="subcellular location">
    <subcellularLocation>
        <location evidence="11">Cytoplasm</location>
    </subcellularLocation>
    <subcellularLocation>
        <location evidence="10 11">Nucleus</location>
    </subcellularLocation>
    <text evidence="1 11">Subcellular location is tightly regulated by actin both in cytoplasm and nucleus: high levels of G-actin in the nucleus observed during serum deprivation lead to low levels of nuclear MRTFA, while reduced levels of nuclear G-actin result in accumulation of MRTFA in the nucleus (By similarity). G-actin-binding in the cytoplasm inhibits nuclear import by masking the nuclear localization signal (NLS) (By similarity). In contrast, binding to nuclear globular actin (G-actin) promotes nuclear export to the cytoplasm (By similarity). Nuclear localization is regulated by MICAL2, which mediates depolymerization of nuclear actin, which decreases nuclear G-actin pool, thereby promoting retention of MRTFA in the nucleus and subsequent formation of an active complex with SRF (PubMed:24440334). Nuclear import is mediated by importins KPNA4 and KPNB1 (By similarity).</text>
</comment>
<comment type="tissue specificity">
    <text evidence="5 12">Ubiquitously expressed, has been detected in lung, placenta, small intestine, liver, kidney, spleen, thymus, colon, muscle, heart and brain (PubMed:11344311). Expressed in peripheral blood mononuclear cells (at protein level) (PubMed:26224645).</text>
</comment>
<comment type="domain">
    <text evidence="1">The N-terminal region is required for nuclear localization and the C-terminal region mediates transcriptional activity.</text>
</comment>
<comment type="domain">
    <text evidence="1">The RPEL repeats mediate binding to globular actin (G-actin); each RPEL repeat-binding to one G-actin monomer. In addition, each intervening spacer sequence region can bind one G-actin monomer, to reach a pentavalent complex.</text>
</comment>
<comment type="PTM">
    <text evidence="1">Phosphorylation at Ser-6 by Erk inhibits binding of globular actin (G-actin), unmasking the nuclear localization signal (NLS) and promoting nuclear import.</text>
</comment>
<comment type="disease">
    <text evidence="5 6">A chromosomal aberration involving MRTFA may be a cause of acute megakaryoblastic leukemia. Translocation t(1;22)(p13;q13) with RBM15 (PubMed:11344311, PubMed:11431691). Although both reciprocal fusion transcripts are detected in acute megakaryoblastic leukemia (AMKL, FAB-M7), the RBM15-MRTFA chimeric protein has all the putative functional domains encoded by each gene and is the candidate oncogene (PubMed:11344311, PubMed:11431691).</text>
</comment>
<comment type="disease" evidence="12">
    <disease id="DI-05815">
        <name>Immunodeficiency 66</name>
        <acronym>IMD66</acronym>
        <description>An autosomal recessive primary immunologic disorder characterized by recurrent viral infections from infancy, associated with impaired neutrophil migration due to defects in cytoskeletal actin dynamics.</description>
        <dbReference type="MIM" id="618847"/>
    </disease>
    <text>The disease is caused by variants affecting the gene represented in this entry.</text>
</comment>
<comment type="sequence caution" evidence="15">
    <conflict type="erroneous initiation">
        <sequence resource="EMBL-CDS" id="AAK56920"/>
    </conflict>
    <text>Extended N-terminus.</text>
</comment>
<comment type="sequence caution" evidence="15">
    <conflict type="erroneous initiation">
        <sequence resource="EMBL-CDS" id="BAA92676"/>
    </conflict>
    <text>Extended N-terminus.</text>
</comment>
<comment type="sequence caution" evidence="15">
    <conflict type="erroneous initiation">
        <sequence resource="EMBL-CDS" id="CAC38828"/>
    </conflict>
    <text>Extended N-terminus.</text>
</comment>
<comment type="sequence caution" evidence="15">
    <conflict type="erroneous initiation">
        <sequence resource="EMBL-CDS" id="CAC38829"/>
    </conflict>
    <text>Extended N-terminus.</text>
</comment>
<comment type="online information" name="Atlas of Genetics and Cytogenetics in Oncology and Haematology">
    <link uri="https://atlasgeneticsoncology.org/gene/352/MAL"/>
</comment>
<feature type="chain" id="PRO_0000126625" description="Myocardin-related transcription factor A">
    <location>
        <begin position="1"/>
        <end position="931"/>
    </location>
</feature>
<feature type="repeat" description="RPEL 1">
    <location>
        <begin position="24"/>
        <end position="49"/>
    </location>
</feature>
<feature type="repeat" description="RPEL 2">
    <location>
        <begin position="68"/>
        <end position="93"/>
    </location>
</feature>
<feature type="domain" description="SAP" evidence="3">
    <location>
        <begin position="347"/>
        <end position="381"/>
    </location>
</feature>
<feature type="region of interest" description="Mediates interaction with SCAI and ACTB" evidence="1">
    <location>
        <begin position="1"/>
        <end position="256"/>
    </location>
</feature>
<feature type="region of interest" description="Intervening spacer sequence 1" evidence="1">
    <location>
        <begin position="6"/>
        <end position="23"/>
    </location>
</feature>
<feature type="region of interest" description="Intervening spacer sequence 2" evidence="1">
    <location>
        <begin position="50"/>
        <end position="67"/>
    </location>
</feature>
<feature type="region of interest" description="Disordered" evidence="4">
    <location>
        <begin position="110"/>
        <end position="256"/>
    </location>
</feature>
<feature type="region of interest" description="Disordered" evidence="4">
    <location>
        <begin position="290"/>
        <end position="344"/>
    </location>
</feature>
<feature type="region of interest" description="Disordered" evidence="4">
    <location>
        <begin position="444"/>
        <end position="476"/>
    </location>
</feature>
<feature type="region of interest" description="Disordered" evidence="4">
    <location>
        <begin position="558"/>
        <end position="577"/>
    </location>
</feature>
<feature type="region of interest" description="Disordered" evidence="4">
    <location>
        <begin position="674"/>
        <end position="746"/>
    </location>
</feature>
<feature type="region of interest" description="Disordered" evidence="4">
    <location>
        <begin position="763"/>
        <end position="816"/>
    </location>
</feature>
<feature type="coiled-coil region" evidence="2">
    <location>
        <begin position="515"/>
        <end position="563"/>
    </location>
</feature>
<feature type="short sequence motif" description="Bipartite Nuclear localization signal" evidence="1">
    <location>
        <begin position="27"/>
        <end position="65"/>
    </location>
</feature>
<feature type="compositionally biased region" description="Polar residues" evidence="4">
    <location>
        <begin position="151"/>
        <end position="162"/>
    </location>
</feature>
<feature type="compositionally biased region" description="Pro residues" evidence="4">
    <location>
        <begin position="180"/>
        <end position="189"/>
    </location>
</feature>
<feature type="compositionally biased region" description="Polar residues" evidence="4">
    <location>
        <begin position="191"/>
        <end position="215"/>
    </location>
</feature>
<feature type="compositionally biased region" description="Basic and acidic residues" evidence="4">
    <location>
        <begin position="216"/>
        <end position="231"/>
    </location>
</feature>
<feature type="compositionally biased region" description="Low complexity" evidence="4">
    <location>
        <begin position="310"/>
        <end position="320"/>
    </location>
</feature>
<feature type="compositionally biased region" description="Polar residues" evidence="4">
    <location>
        <begin position="459"/>
        <end position="473"/>
    </location>
</feature>
<feature type="compositionally biased region" description="Low complexity" evidence="4">
    <location>
        <begin position="678"/>
        <end position="694"/>
    </location>
</feature>
<feature type="compositionally biased region" description="Polar residues" evidence="4">
    <location>
        <begin position="732"/>
        <end position="746"/>
    </location>
</feature>
<feature type="compositionally biased region" description="Basic and acidic residues" evidence="4">
    <location>
        <begin position="763"/>
        <end position="778"/>
    </location>
</feature>
<feature type="compositionally biased region" description="Low complexity" evidence="4">
    <location>
        <begin position="784"/>
        <end position="799"/>
    </location>
</feature>
<feature type="site" description="Breakpoint for translocation to form RBM15-MRTFA" evidence="6">
    <location>
        <begin position="3"/>
        <end position="4"/>
    </location>
</feature>
<feature type="modified residue" description="Phosphoserine" evidence="17 20">
    <location>
        <position position="6"/>
    </location>
</feature>
<feature type="modified residue" description="Phosphoserine" evidence="1">
    <location>
        <position position="124"/>
    </location>
</feature>
<feature type="modified residue" description="Phosphoserine" evidence="1">
    <location>
        <position position="139"/>
    </location>
</feature>
<feature type="modified residue" description="Phosphoserine" evidence="21">
    <location>
        <position position="156"/>
    </location>
</feature>
<feature type="modified residue" description="Phosphothreonine" evidence="18">
    <location>
        <position position="305"/>
    </location>
</feature>
<feature type="modified residue" description="Phosphoserine" evidence="1">
    <location>
        <position position="310"/>
    </location>
</feature>
<feature type="modified residue" description="Phosphoserine" evidence="1">
    <location>
        <position position="312"/>
    </location>
</feature>
<feature type="modified residue" description="Phosphothreonine" evidence="1">
    <location>
        <position position="313"/>
    </location>
</feature>
<feature type="modified residue" description="Phosphoserine" evidence="1">
    <location>
        <position position="317"/>
    </location>
</feature>
<feature type="modified residue" description="Phosphoserine" evidence="1">
    <location>
        <position position="320"/>
    </location>
</feature>
<feature type="modified residue" description="Phosphoserine" evidence="21">
    <location>
        <position position="333"/>
    </location>
</feature>
<feature type="modified residue" description="Phosphoserine" evidence="21 22">
    <location>
        <position position="385"/>
    </location>
</feature>
<feature type="modified residue" description="Phosphoserine" evidence="1">
    <location>
        <position position="446"/>
    </location>
</feature>
<feature type="modified residue" description="Phosphothreonine" evidence="1">
    <location>
        <position position="447"/>
    </location>
</feature>
<feature type="modified residue" description="Phosphoserine" evidence="1">
    <location>
        <position position="449"/>
    </location>
</feature>
<feature type="modified residue" description="Phosphothreonine" evidence="18 19 20 21">
    <location>
        <position position="450"/>
    </location>
</feature>
<feature type="modified residue" description="Phosphoserine" evidence="19 20">
    <location>
        <position position="454"/>
    </location>
</feature>
<feature type="modified residue" description="Phosphothreonine" evidence="1">
    <location>
        <position position="456"/>
    </location>
</feature>
<feature type="modified residue" description="Phosphoserine" evidence="1">
    <location>
        <position position="458"/>
    </location>
</feature>
<feature type="modified residue" description="Phosphoserine" evidence="1">
    <location>
        <position position="482"/>
    </location>
</feature>
<feature type="modified residue" description="Phosphoserine" evidence="1">
    <location>
        <position position="492"/>
    </location>
</feature>
<feature type="modified residue" description="Phosphoserine" evidence="1">
    <location>
        <position position="507"/>
    </location>
</feature>
<feature type="modified residue" description="Phosphoserine" evidence="1">
    <location>
        <position position="511"/>
    </location>
</feature>
<feature type="modified residue" description="Phosphoserine" evidence="1">
    <location>
        <position position="685"/>
    </location>
</feature>
<feature type="modified residue" description="Phosphoserine" evidence="1">
    <location>
        <position position="691"/>
    </location>
</feature>
<feature type="modified residue" description="Phosphoserine" evidence="1">
    <location>
        <position position="695"/>
    </location>
</feature>
<feature type="modified residue" description="Phosphoserine" evidence="1">
    <location>
        <position position="792"/>
    </location>
</feature>
<feature type="modified residue" description="Phosphoserine" evidence="1">
    <location>
        <position position="807"/>
    </location>
</feature>
<feature type="modified residue" description="Phosphoserine" evidence="1">
    <location>
        <position position="859"/>
    </location>
</feature>
<feature type="sequence variant" id="VAR_021409" description="In dbSNP:rs878756." evidence="8 9">
    <original>S</original>
    <variation>G</variation>
    <location>
        <position position="648"/>
    </location>
</feature>
<feature type="sequence variant" id="VAR_084011" description="In IMD66; probable loss-of-function; patient's dendritic cells are morphologically distinct from control dendritic cells and show reduced spreading on fibronectin-coated coverslips, a marked reduction in total F-actin staining and a complete absence of podosomes, a similar phenotype to that of THP1 cells in which MRTFA was silenced." evidence="12">
    <location>
        <begin position="723"/>
        <end position="931"/>
    </location>
</feature>
<feature type="turn" evidence="23">
    <location>
        <begin position="345"/>
        <end position="349"/>
    </location>
</feature>
<feature type="helix" evidence="23">
    <location>
        <begin position="352"/>
        <end position="361"/>
    </location>
</feature>
<feature type="helix" evidence="23">
    <location>
        <begin position="370"/>
        <end position="382"/>
    </location>
</feature>
<feature type="strand" evidence="23">
    <location>
        <begin position="388"/>
        <end position="390"/>
    </location>
</feature>
<feature type="strand" evidence="24">
    <location>
        <begin position="392"/>
        <end position="394"/>
    </location>
</feature>
<gene>
    <name evidence="16" type="primary">MRTFA</name>
    <name evidence="13" type="synonym">KIAA1438</name>
    <name evidence="1" type="synonym">MAL</name>
    <name evidence="14" type="synonym">MKL1</name>
</gene>
<accession>Q969V6</accession>
<accession>Q8TCL1</accession>
<accession>Q96SC5</accession>
<accession>Q96SC6</accession>
<accession>Q9P2B0</accession>
<name>MRTFA_HUMAN</name>
<sequence>MPPLKSPAAFHEQRRSLERARTEDYLKRKIRSRPERSELVRMHILEETSAEPSLQAKQLKLKRARLADDLNEKIAQRPGPMELVEKNILPVESSLKEAIIVGQVNYPKVADSSSFDEDSSDALSPEQPASHESQGSVPSPLEARVSEPLLSATSASPTQVVSQLPMGRDSREMLFLAEQPPLPPPPLLPPSLTNGTTIPTAKSTPTLIKQSQPKSASEKSQRSKKAKELKPKVKKLKYHQYIPPDQKQDRGAPPMDSSYAKILQQQQLFLQLQILNQQQQQHHNYQAILPAPPKSAGEALGSSGTPPVRSLSTTNSSSSSGAPGPCGLARQNSTSLTGKPGALPANLDDMKVAELKQELKLRSLPVSGTKTELIERLRAYQDQISPVPGAPKAPAATSILHKAGEVVVAFPAARLSTGPALVAAGLAPAEVVVATVASSGVVKFGSTGSTPPVSPTPSERSLLSTGDENSTPGDTFGEMVTSPLTQLTLQASPLQILVKEEGPRAGSCCLSPGGRAELEGRDKDQMLQEKDKQIEALTRMLRQKQQLVERLKLQLEQEKRAQQPAPAPAPLGTPVKQENSFSSCQLSQQPLGPAHPFNPSLAAPATNHIDPCAVAPGPPSVVVKQEALQPEPEPVPAPQLLLGPQGPSLIKGVAPPTLITDSTGTHLVLTVTNKNADSPGLSSGSPQQPSSQPGSPAPAPSAQMDLEHPLQPLFGTPTSLLKKEPPGYEEAMSQQPKQQENGSSSQQMDDLFDILIQSGEISADFKEPPSLPGKEKPSPKTVCGSPLAAQPSPSAELPQAAPPPPGSPSLPGRLEDFLESSTGLPLLTSGHDGPEPLSLIDDLHSQMLSSTAILDHPPSPMDTSELHFVPEPSSTMGLDLADGHLDSMDWLELSSGGPVLSLAPLSTTAPSLFSTDFLDGHDLQLHWDSCL</sequence>
<protein>
    <recommendedName>
        <fullName evidence="15">Myocardin-related transcription factor A</fullName>
        <shortName evidence="15">MRTF-A</shortName>
    </recommendedName>
    <alternativeName>
        <fullName evidence="14">MKL/myocardin-like protein 1</fullName>
    </alternativeName>
    <alternativeName>
        <fullName evidence="14">Megakaryoblastic leukemia 1 protein</fullName>
    </alternativeName>
    <alternativeName>
        <fullName evidence="1">Megakaryocytic acute leukemia protein</fullName>
    </alternativeName>
</protein>
<organism>
    <name type="scientific">Homo sapiens</name>
    <name type="common">Human</name>
    <dbReference type="NCBI Taxonomy" id="9606"/>
    <lineage>
        <taxon>Eukaryota</taxon>
        <taxon>Metazoa</taxon>
        <taxon>Chordata</taxon>
        <taxon>Craniata</taxon>
        <taxon>Vertebrata</taxon>
        <taxon>Euteleostomi</taxon>
        <taxon>Mammalia</taxon>
        <taxon>Eutheria</taxon>
        <taxon>Euarchontoglires</taxon>
        <taxon>Primates</taxon>
        <taxon>Haplorrhini</taxon>
        <taxon>Catarrhini</taxon>
        <taxon>Hominidae</taxon>
        <taxon>Homo</taxon>
    </lineage>
</organism>
<evidence type="ECO:0000250" key="1">
    <source>
        <dbReference type="UniProtKB" id="Q8K4J6"/>
    </source>
</evidence>
<evidence type="ECO:0000255" key="2"/>
<evidence type="ECO:0000255" key="3">
    <source>
        <dbReference type="PROSITE-ProRule" id="PRU00186"/>
    </source>
</evidence>
<evidence type="ECO:0000256" key="4">
    <source>
        <dbReference type="SAM" id="MobiDB-lite"/>
    </source>
</evidence>
<evidence type="ECO:0000269" key="5">
    <source>
    </source>
</evidence>
<evidence type="ECO:0000269" key="6">
    <source>
    </source>
</evidence>
<evidence type="ECO:0000269" key="7">
    <source>
    </source>
</evidence>
<evidence type="ECO:0000269" key="8">
    <source>
    </source>
</evidence>
<evidence type="ECO:0000269" key="9">
    <source>
    </source>
</evidence>
<evidence type="ECO:0000269" key="10">
    <source>
    </source>
</evidence>
<evidence type="ECO:0000269" key="11">
    <source>
    </source>
</evidence>
<evidence type="ECO:0000269" key="12">
    <source>
    </source>
</evidence>
<evidence type="ECO:0000303" key="13">
    <source>
    </source>
</evidence>
<evidence type="ECO:0000303" key="14">
    <source>
    </source>
</evidence>
<evidence type="ECO:0000305" key="15"/>
<evidence type="ECO:0000312" key="16">
    <source>
        <dbReference type="HGNC" id="HGNC:14334"/>
    </source>
</evidence>
<evidence type="ECO:0007744" key="17">
    <source>
    </source>
</evidence>
<evidence type="ECO:0007744" key="18">
    <source>
    </source>
</evidence>
<evidence type="ECO:0007744" key="19">
    <source>
    </source>
</evidence>
<evidence type="ECO:0007744" key="20">
    <source>
    </source>
</evidence>
<evidence type="ECO:0007744" key="21">
    <source>
    </source>
</evidence>
<evidence type="ECO:0007744" key="22">
    <source>
    </source>
</evidence>
<evidence type="ECO:0007829" key="23">
    <source>
        <dbReference type="PDB" id="2KVU"/>
    </source>
</evidence>
<evidence type="ECO:0007829" key="24">
    <source>
        <dbReference type="PDB" id="2KW9"/>
    </source>
</evidence>
<dbReference type="EMBL" id="AJ297257">
    <property type="protein sequence ID" value="CAC38826.1"/>
    <property type="molecule type" value="mRNA"/>
</dbReference>
<dbReference type="EMBL" id="AF364035">
    <property type="protein sequence ID" value="AAK56920.1"/>
    <property type="status" value="ALT_INIT"/>
    <property type="molecule type" value="mRNA"/>
</dbReference>
<dbReference type="EMBL" id="CR456522">
    <property type="protein sequence ID" value="CAG30408.1"/>
    <property type="molecule type" value="mRNA"/>
</dbReference>
<dbReference type="EMBL" id="AJ297258">
    <property type="protein sequence ID" value="CAC38827.1"/>
    <property type="molecule type" value="mRNA"/>
</dbReference>
<dbReference type="EMBL" id="AF368061">
    <property type="protein sequence ID" value="AAK54721.1"/>
    <property type="molecule type" value="mRNA"/>
</dbReference>
<dbReference type="EMBL" id="AJ303089">
    <property type="protein sequence ID" value="CAC38828.1"/>
    <property type="status" value="ALT_INIT"/>
    <property type="molecule type" value="mRNA"/>
</dbReference>
<dbReference type="EMBL" id="AJ303090">
    <property type="protein sequence ID" value="CAC38829.1"/>
    <property type="status" value="ALT_INIT"/>
    <property type="molecule type" value="mRNA"/>
</dbReference>
<dbReference type="EMBL" id="AB037859">
    <property type="protein sequence ID" value="BAA92676.2"/>
    <property type="status" value="ALT_INIT"/>
    <property type="molecule type" value="mRNA"/>
</dbReference>
<dbReference type="EMBL" id="AL022238">
    <property type="status" value="NOT_ANNOTATED_CDS"/>
    <property type="molecule type" value="Genomic_DNA"/>
</dbReference>
<dbReference type="EMBL" id="AL713710">
    <property type="protein sequence ID" value="CAD28507.2"/>
    <property type="molecule type" value="mRNA"/>
</dbReference>
<dbReference type="CCDS" id="CCDS14003.1"/>
<dbReference type="RefSeq" id="NP_001269589.1">
    <property type="nucleotide sequence ID" value="NM_001282660.2"/>
</dbReference>
<dbReference type="RefSeq" id="NP_001269590.1">
    <property type="nucleotide sequence ID" value="NM_001282661.1"/>
</dbReference>
<dbReference type="RefSeq" id="NP_065882.1">
    <property type="nucleotide sequence ID" value="NM_020831.4"/>
</dbReference>
<dbReference type="RefSeq" id="XP_005261751.1">
    <property type="nucleotide sequence ID" value="XM_005261694.1"/>
</dbReference>
<dbReference type="PDB" id="2KVU">
    <property type="method" value="NMR"/>
    <property type="chains" value="A=336-396"/>
</dbReference>
<dbReference type="PDB" id="2KW9">
    <property type="method" value="NMR"/>
    <property type="chains" value="A=336-396"/>
</dbReference>
<dbReference type="PDBsum" id="2KVU"/>
<dbReference type="PDBsum" id="2KW9"/>
<dbReference type="BMRB" id="Q969V6"/>
<dbReference type="SMR" id="Q969V6"/>
<dbReference type="BioGRID" id="121642">
    <property type="interactions" value="57"/>
</dbReference>
<dbReference type="CORUM" id="Q969V6"/>
<dbReference type="FunCoup" id="Q969V6">
    <property type="interactions" value="3557"/>
</dbReference>
<dbReference type="IntAct" id="Q969V6">
    <property type="interactions" value="26"/>
</dbReference>
<dbReference type="MINT" id="Q969V6"/>
<dbReference type="STRING" id="9606.ENSP00000498671"/>
<dbReference type="DrugBank" id="DB08080">
    <property type="generic name" value="Latrunculin B"/>
</dbReference>
<dbReference type="GlyCosmos" id="Q969V6">
    <property type="glycosylation" value="2 sites, 1 glycan"/>
</dbReference>
<dbReference type="GlyGen" id="Q969V6">
    <property type="glycosylation" value="6 sites, 1 N-linked glycan (1 site), 1 O-linked glycan (4 sites)"/>
</dbReference>
<dbReference type="iPTMnet" id="Q969V6"/>
<dbReference type="PhosphoSitePlus" id="Q969V6"/>
<dbReference type="BioMuta" id="MKL1"/>
<dbReference type="DMDM" id="32363202"/>
<dbReference type="jPOST" id="Q969V6"/>
<dbReference type="MassIVE" id="Q969V6"/>
<dbReference type="PaxDb" id="9606-ENSP00000347847"/>
<dbReference type="PeptideAtlas" id="Q969V6"/>
<dbReference type="ProteomicsDB" id="75854"/>
<dbReference type="Pumba" id="Q969V6"/>
<dbReference type="Antibodypedia" id="26780">
    <property type="antibodies" value="366 antibodies from 33 providers"/>
</dbReference>
<dbReference type="DNASU" id="57591"/>
<dbReference type="Ensembl" id="ENST00000407029.7">
    <property type="protein sequence ID" value="ENSP00000385835.1"/>
    <property type="gene ID" value="ENSG00000196588.21"/>
</dbReference>
<dbReference type="GeneID" id="57591"/>
<dbReference type="KEGG" id="hsa:57591"/>
<dbReference type="UCSC" id="uc003ayv.3">
    <property type="organism name" value="human"/>
</dbReference>
<dbReference type="AGR" id="HGNC:14334"/>
<dbReference type="CTD" id="57591"/>
<dbReference type="DisGeNET" id="57591"/>
<dbReference type="GeneCards" id="MRTFA"/>
<dbReference type="HGNC" id="HGNC:14334">
    <property type="gene designation" value="MRTFA"/>
</dbReference>
<dbReference type="HPA" id="ENSG00000196588">
    <property type="expression patterns" value="Low tissue specificity"/>
</dbReference>
<dbReference type="MalaCards" id="MRTFA"/>
<dbReference type="MIM" id="606078">
    <property type="type" value="gene"/>
</dbReference>
<dbReference type="MIM" id="618847">
    <property type="type" value="phenotype"/>
</dbReference>
<dbReference type="neXtProt" id="NX_Q969V6"/>
<dbReference type="OpenTargets" id="ENSG00000196588"/>
<dbReference type="Orphanet" id="619941">
    <property type="disease" value="Congenital neutropenia-combined immunodeficiency due to MKL1 deficiency"/>
</dbReference>
<dbReference type="Orphanet" id="402023">
    <property type="disease" value="Megakaryoblastic acute myeloid leukemia with t(1;22)(p13;q13)"/>
</dbReference>
<dbReference type="PharmGKB" id="PA30827"/>
<dbReference type="VEuPathDB" id="HostDB:ENSG00000196588"/>
<dbReference type="eggNOG" id="ENOG502R5FB">
    <property type="taxonomic scope" value="Eukaryota"/>
</dbReference>
<dbReference type="GeneTree" id="ENSGT00950000182979"/>
<dbReference type="InParanoid" id="Q969V6"/>
<dbReference type="OrthoDB" id="197676at2759"/>
<dbReference type="PAN-GO" id="Q969V6">
    <property type="GO annotations" value="4 GO annotations based on evolutionary models"/>
</dbReference>
<dbReference type="PhylomeDB" id="Q969V6"/>
<dbReference type="TreeFam" id="TF326024"/>
<dbReference type="PathwayCommons" id="Q969V6"/>
<dbReference type="Reactome" id="R-HSA-3899300">
    <property type="pathway name" value="SUMOylation of transcription cofactors"/>
</dbReference>
<dbReference type="Reactome" id="R-HSA-5663220">
    <property type="pathway name" value="RHO GTPases Activate Formins"/>
</dbReference>
<dbReference type="SignaLink" id="Q969V6"/>
<dbReference type="SIGNOR" id="Q969V6"/>
<dbReference type="BioGRID-ORCS" id="57591">
    <property type="hits" value="29 hits in 1167 CRISPR screens"/>
</dbReference>
<dbReference type="ChiTaRS" id="SMARCA4">
    <property type="organism name" value="human"/>
</dbReference>
<dbReference type="EvolutionaryTrace" id="Q969V6"/>
<dbReference type="GeneWiki" id="MKL1"/>
<dbReference type="GenomeRNAi" id="57591"/>
<dbReference type="Pharos" id="Q969V6">
    <property type="development level" value="Tbio"/>
</dbReference>
<dbReference type="PRO" id="PR:Q969V6"/>
<dbReference type="Proteomes" id="UP000005640">
    <property type="component" value="Chromosome 22"/>
</dbReference>
<dbReference type="RNAct" id="Q969V6">
    <property type="molecule type" value="protein"/>
</dbReference>
<dbReference type="Bgee" id="ENSG00000196588">
    <property type="expression patterns" value="Expressed in monocyte and 184 other cell types or tissues"/>
</dbReference>
<dbReference type="ExpressionAtlas" id="Q969V6">
    <property type="expression patterns" value="baseline and differential"/>
</dbReference>
<dbReference type="GO" id="GO:0005737">
    <property type="term" value="C:cytoplasm"/>
    <property type="evidence" value="ECO:0000314"/>
    <property type="project" value="BHF-UCL"/>
</dbReference>
<dbReference type="GO" id="GO:0005829">
    <property type="term" value="C:cytosol"/>
    <property type="evidence" value="ECO:0000314"/>
    <property type="project" value="HPA"/>
</dbReference>
<dbReference type="GO" id="GO:0005654">
    <property type="term" value="C:nucleoplasm"/>
    <property type="evidence" value="ECO:0000314"/>
    <property type="project" value="HPA"/>
</dbReference>
<dbReference type="GO" id="GO:0005634">
    <property type="term" value="C:nucleus"/>
    <property type="evidence" value="ECO:0000314"/>
    <property type="project" value="UniProtKB"/>
</dbReference>
<dbReference type="GO" id="GO:0003779">
    <property type="term" value="F:actin binding"/>
    <property type="evidence" value="ECO:0000314"/>
    <property type="project" value="UniProtKB"/>
</dbReference>
<dbReference type="GO" id="GO:0003785">
    <property type="term" value="F:actin monomer binding"/>
    <property type="evidence" value="ECO:0000250"/>
    <property type="project" value="UniProtKB"/>
</dbReference>
<dbReference type="GO" id="GO:0043522">
    <property type="term" value="F:leucine zipper domain binding"/>
    <property type="evidence" value="ECO:0000353"/>
    <property type="project" value="BHF-UCL"/>
</dbReference>
<dbReference type="GO" id="GO:0003713">
    <property type="term" value="F:transcription coactivator activity"/>
    <property type="evidence" value="ECO:0000316"/>
    <property type="project" value="ARUK-UCL"/>
</dbReference>
<dbReference type="GO" id="GO:0030036">
    <property type="term" value="P:actin cytoskeleton organization"/>
    <property type="evidence" value="ECO:0000250"/>
    <property type="project" value="UniProtKB"/>
</dbReference>
<dbReference type="GO" id="GO:1902895">
    <property type="term" value="P:positive regulation of miRNA transcription"/>
    <property type="evidence" value="ECO:0000316"/>
    <property type="project" value="ARUK-UCL"/>
</dbReference>
<dbReference type="GO" id="GO:0045944">
    <property type="term" value="P:positive regulation of transcription by RNA polymerase II"/>
    <property type="evidence" value="ECO:0000314"/>
    <property type="project" value="UniProtKB"/>
</dbReference>
<dbReference type="GO" id="GO:0051145">
    <property type="term" value="P:smooth muscle cell differentiation"/>
    <property type="evidence" value="ECO:0000315"/>
    <property type="project" value="BHF-UCL"/>
</dbReference>
<dbReference type="GO" id="GO:0044319">
    <property type="term" value="P:wound healing, spreading of cells"/>
    <property type="evidence" value="ECO:0000314"/>
    <property type="project" value="CACAO"/>
</dbReference>
<dbReference type="FunFam" id="1.10.720.30:FF:000002">
    <property type="entry name" value="Myocardin related transcription factor A"/>
    <property type="match status" value="1"/>
</dbReference>
<dbReference type="Gene3D" id="6.10.140.2040">
    <property type="match status" value="1"/>
</dbReference>
<dbReference type="Gene3D" id="6.10.150.10">
    <property type="match status" value="1"/>
</dbReference>
<dbReference type="Gene3D" id="1.10.720.30">
    <property type="entry name" value="SAP domain"/>
    <property type="match status" value="1"/>
</dbReference>
<dbReference type="IDEAL" id="IID00493"/>
<dbReference type="InterPro" id="IPR043451">
    <property type="entry name" value="Myocardin-like"/>
</dbReference>
<dbReference type="InterPro" id="IPR004018">
    <property type="entry name" value="RPEL_repeat"/>
</dbReference>
<dbReference type="InterPro" id="IPR003034">
    <property type="entry name" value="SAP_dom"/>
</dbReference>
<dbReference type="InterPro" id="IPR036361">
    <property type="entry name" value="SAP_dom_sf"/>
</dbReference>
<dbReference type="PANTHER" id="PTHR22793:SF6">
    <property type="entry name" value="MYOCARDIN-RELATED TRANSCRIPTION FACTOR A"/>
    <property type="match status" value="1"/>
</dbReference>
<dbReference type="PANTHER" id="PTHR22793">
    <property type="entry name" value="MYOCARDIN-RELATED TRANSCRIPTION FACTOR-RELATED"/>
    <property type="match status" value="1"/>
</dbReference>
<dbReference type="Pfam" id="PF02755">
    <property type="entry name" value="RPEL"/>
    <property type="match status" value="2"/>
</dbReference>
<dbReference type="Pfam" id="PF02037">
    <property type="entry name" value="SAP"/>
    <property type="match status" value="1"/>
</dbReference>
<dbReference type="SMART" id="SM00707">
    <property type="entry name" value="RPEL"/>
    <property type="match status" value="2"/>
</dbReference>
<dbReference type="SMART" id="SM00513">
    <property type="entry name" value="SAP"/>
    <property type="match status" value="1"/>
</dbReference>
<dbReference type="SUPFAM" id="SSF68906">
    <property type="entry name" value="SAP domain"/>
    <property type="match status" value="1"/>
</dbReference>
<dbReference type="PROSITE" id="PS51073">
    <property type="entry name" value="RPEL"/>
    <property type="match status" value="2"/>
</dbReference>
<dbReference type="PROSITE" id="PS50800">
    <property type="entry name" value="SAP"/>
    <property type="match status" value="1"/>
</dbReference>
<keyword id="KW-0002">3D-structure</keyword>
<keyword id="KW-0009">Actin-binding</keyword>
<keyword id="KW-0160">Chromosomal rearrangement</keyword>
<keyword id="KW-0175">Coiled coil</keyword>
<keyword id="KW-0963">Cytoplasm</keyword>
<keyword id="KW-0225">Disease variant</keyword>
<keyword id="KW-0539">Nucleus</keyword>
<keyword id="KW-0597">Phosphoprotein</keyword>
<keyword id="KW-1267">Proteomics identification</keyword>
<keyword id="KW-0656">Proto-oncogene</keyword>
<keyword id="KW-1185">Reference proteome</keyword>
<keyword id="KW-0677">Repeat</keyword>
<keyword id="KW-0804">Transcription</keyword>
<keyword id="KW-0805">Transcription regulation</keyword>
<reference key="1">
    <citation type="journal article" date="2001" name="Nat. Genet.">
        <title>Fusion of two novel genes, RBM15 and MKL1, in the t(1;22)(p13;q13) of acute megakaryoblastic leukemia.</title>
        <authorList>
            <person name="Ma Z."/>
            <person name="Morris S.W."/>
            <person name="Valentine V."/>
            <person name="Li M."/>
            <person name="Herbrick J.-A."/>
            <person name="Cui X."/>
            <person name="Bouman D."/>
            <person name="Li Y."/>
            <person name="Mehta P.K."/>
            <person name="Nizetic D."/>
            <person name="Kaneko Y."/>
            <person name="Chan G.C.F."/>
            <person name="Chan L.C."/>
            <person name="Squire J."/>
            <person name="Scherer S.W."/>
            <person name="Hitzler J.K."/>
        </authorList>
    </citation>
    <scope>NUCLEOTIDE SEQUENCE [MRNA]</scope>
    <scope>CHROMOSOMAL TRANSLOCATION WITH RBM15</scope>
</reference>
<reference key="2">
    <citation type="journal article" date="2001" name="Proc. Natl. Acad. Sci. U.S.A.">
        <title>Involvement of a human gene related to the Drosophila spen gene in the recurrent t(1;22) translocation of acute megakaryocytic leukemia.</title>
        <authorList>
            <person name="Mercher T."/>
            <person name="Coniat M.B.-L."/>
            <person name="Monni R."/>
            <person name="Mauchauffe M."/>
            <person name="Khac F.N."/>
            <person name="Gressin L."/>
            <person name="Mugneret F."/>
            <person name="Leblanc T."/>
            <person name="Dastugue N."/>
            <person name="Berger R."/>
            <person name="Bernard O.A."/>
        </authorList>
    </citation>
    <scope>NUCLEOTIDE SEQUENCE [MRNA]</scope>
    <scope>CHROMOSOMAL TRANSLOCATION WITH RBM15</scope>
    <scope>TISSUE SPECIFICITY</scope>
    <source>
        <tissue>Blood</tissue>
    </source>
</reference>
<reference key="3">
    <citation type="journal article" date="2000" name="DNA Res.">
        <title>Prediction of the coding sequences of unidentified human genes. XVI. The complete sequences of 150 new cDNA clones from brain which code for large proteins in vitro.</title>
        <authorList>
            <person name="Nagase T."/>
            <person name="Kikuno R."/>
            <person name="Ishikawa K."/>
            <person name="Hirosawa M."/>
            <person name="Ohara O."/>
        </authorList>
    </citation>
    <scope>NUCLEOTIDE SEQUENCE [LARGE SCALE MRNA]</scope>
    <source>
        <tissue>Brain</tissue>
    </source>
</reference>
<reference key="4">
    <citation type="journal article" date="2002" name="DNA Res.">
        <title>Construction of expression-ready cDNA clones for KIAA genes: manual curation of 330 KIAA cDNA clones.</title>
        <authorList>
            <person name="Nakajima D."/>
            <person name="Okazaki N."/>
            <person name="Yamakawa H."/>
            <person name="Kikuno R."/>
            <person name="Ohara O."/>
            <person name="Nagase T."/>
        </authorList>
    </citation>
    <scope>SEQUENCE REVISION</scope>
</reference>
<reference key="5">
    <citation type="journal article" date="2004" name="Genome Biol.">
        <title>A genome annotation-driven approach to cloning the human ORFeome.</title>
        <authorList>
            <person name="Collins J.E."/>
            <person name="Wright C.L."/>
            <person name="Edwards C.A."/>
            <person name="Davis M.P."/>
            <person name="Grinham J.A."/>
            <person name="Cole C.G."/>
            <person name="Goward M.E."/>
            <person name="Aguado B."/>
            <person name="Mallya M."/>
            <person name="Mokrab Y."/>
            <person name="Huckle E.J."/>
            <person name="Beare D.M."/>
            <person name="Dunham I."/>
        </authorList>
    </citation>
    <scope>NUCLEOTIDE SEQUENCE [LARGE SCALE MRNA]</scope>
    <scope>VARIANT GLY-648</scope>
</reference>
<reference key="6">
    <citation type="journal article" date="1999" name="Nature">
        <title>The DNA sequence of human chromosome 22.</title>
        <authorList>
            <person name="Dunham I."/>
            <person name="Hunt A.R."/>
            <person name="Collins J.E."/>
            <person name="Bruskiewich R."/>
            <person name="Beare D.M."/>
            <person name="Clamp M."/>
            <person name="Smink L.J."/>
            <person name="Ainscough R."/>
            <person name="Almeida J.P."/>
            <person name="Babbage A.K."/>
            <person name="Bagguley C."/>
            <person name="Bailey J."/>
            <person name="Barlow K.F."/>
            <person name="Bates K.N."/>
            <person name="Beasley O.P."/>
            <person name="Bird C.P."/>
            <person name="Blakey S.E."/>
            <person name="Bridgeman A.M."/>
            <person name="Buck D."/>
            <person name="Burgess J."/>
            <person name="Burrill W.D."/>
            <person name="Burton J."/>
            <person name="Carder C."/>
            <person name="Carter N.P."/>
            <person name="Chen Y."/>
            <person name="Clark G."/>
            <person name="Clegg S.M."/>
            <person name="Cobley V.E."/>
            <person name="Cole C.G."/>
            <person name="Collier R.E."/>
            <person name="Connor R."/>
            <person name="Conroy D."/>
            <person name="Corby N.R."/>
            <person name="Coville G.J."/>
            <person name="Cox A.V."/>
            <person name="Davis J."/>
            <person name="Dawson E."/>
            <person name="Dhami P.D."/>
            <person name="Dockree C."/>
            <person name="Dodsworth S.J."/>
            <person name="Durbin R.M."/>
            <person name="Ellington A.G."/>
            <person name="Evans K.L."/>
            <person name="Fey J.M."/>
            <person name="Fleming K."/>
            <person name="French L."/>
            <person name="Garner A.A."/>
            <person name="Gilbert J.G.R."/>
            <person name="Goward M.E."/>
            <person name="Grafham D.V."/>
            <person name="Griffiths M.N.D."/>
            <person name="Hall C."/>
            <person name="Hall R.E."/>
            <person name="Hall-Tamlyn G."/>
            <person name="Heathcott R.W."/>
            <person name="Ho S."/>
            <person name="Holmes S."/>
            <person name="Hunt S.E."/>
            <person name="Jones M.C."/>
            <person name="Kershaw J."/>
            <person name="Kimberley A.M."/>
            <person name="King A."/>
            <person name="Laird G.K."/>
            <person name="Langford C.F."/>
            <person name="Leversha M.A."/>
            <person name="Lloyd C."/>
            <person name="Lloyd D.M."/>
            <person name="Martyn I.D."/>
            <person name="Mashreghi-Mohammadi M."/>
            <person name="Matthews L.H."/>
            <person name="Mccann O.T."/>
            <person name="Mcclay J."/>
            <person name="Mclaren S."/>
            <person name="McMurray A.A."/>
            <person name="Milne S.A."/>
            <person name="Mortimore B.J."/>
            <person name="Odell C.N."/>
            <person name="Pavitt R."/>
            <person name="Pearce A.V."/>
            <person name="Pearson D."/>
            <person name="Phillimore B.J.C.T."/>
            <person name="Phillips S.H."/>
            <person name="Plumb R.W."/>
            <person name="Ramsay H."/>
            <person name="Ramsey Y."/>
            <person name="Rogers L."/>
            <person name="Ross M.T."/>
            <person name="Scott C.E."/>
            <person name="Sehra H.K."/>
            <person name="Skuce C.D."/>
            <person name="Smalley S."/>
            <person name="Smith M.L."/>
            <person name="Soderlund C."/>
            <person name="Spragon L."/>
            <person name="Steward C.A."/>
            <person name="Sulston J.E."/>
            <person name="Swann R.M."/>
            <person name="Vaudin M."/>
            <person name="Wall M."/>
            <person name="Wallis J.M."/>
            <person name="Whiteley M.N."/>
            <person name="Willey D.L."/>
            <person name="Williams L."/>
            <person name="Williams S.A."/>
            <person name="Williamson H."/>
            <person name="Wilmer T.E."/>
            <person name="Wilming L."/>
            <person name="Wright C.L."/>
            <person name="Hubbard T."/>
            <person name="Bentley D.R."/>
            <person name="Beck S."/>
            <person name="Rogers J."/>
            <person name="Shimizu N."/>
            <person name="Minoshima S."/>
            <person name="Kawasaki K."/>
            <person name="Sasaki T."/>
            <person name="Asakawa S."/>
            <person name="Kudoh J."/>
            <person name="Shintani A."/>
            <person name="Shibuya K."/>
            <person name="Yoshizaki Y."/>
            <person name="Aoki N."/>
            <person name="Mitsuyama S."/>
            <person name="Roe B.A."/>
            <person name="Chen F."/>
            <person name="Chu L."/>
            <person name="Crabtree J."/>
            <person name="Deschamps S."/>
            <person name="Do A."/>
            <person name="Do T."/>
            <person name="Dorman A."/>
            <person name="Fang F."/>
            <person name="Fu Y."/>
            <person name="Hu P."/>
            <person name="Hua A."/>
            <person name="Kenton S."/>
            <person name="Lai H."/>
            <person name="Lao H.I."/>
            <person name="Lewis J."/>
            <person name="Lewis S."/>
            <person name="Lin S.-P."/>
            <person name="Loh P."/>
            <person name="Malaj E."/>
            <person name="Nguyen T."/>
            <person name="Pan H."/>
            <person name="Phan S."/>
            <person name="Qi S."/>
            <person name="Qian Y."/>
            <person name="Ray L."/>
            <person name="Ren Q."/>
            <person name="Shaull S."/>
            <person name="Sloan D."/>
            <person name="Song L."/>
            <person name="Wang Q."/>
            <person name="Wang Y."/>
            <person name="Wang Z."/>
            <person name="White J."/>
            <person name="Willingham D."/>
            <person name="Wu H."/>
            <person name="Yao Z."/>
            <person name="Zhan M."/>
            <person name="Zhang G."/>
            <person name="Chissoe S."/>
            <person name="Murray J."/>
            <person name="Miller N."/>
            <person name="Minx P."/>
            <person name="Fulton R."/>
            <person name="Johnson D."/>
            <person name="Bemis G."/>
            <person name="Bentley D."/>
            <person name="Bradshaw H."/>
            <person name="Bourne S."/>
            <person name="Cordes M."/>
            <person name="Du Z."/>
            <person name="Fulton L."/>
            <person name="Goela D."/>
            <person name="Graves T."/>
            <person name="Hawkins J."/>
            <person name="Hinds K."/>
            <person name="Kemp K."/>
            <person name="Latreille P."/>
            <person name="Layman D."/>
            <person name="Ozersky P."/>
            <person name="Rohlfing T."/>
            <person name="Scheet P."/>
            <person name="Walker C."/>
            <person name="Wamsley A."/>
            <person name="Wohldmann P."/>
            <person name="Pepin K."/>
            <person name="Nelson J."/>
            <person name="Korf I."/>
            <person name="Bedell J.A."/>
            <person name="Hillier L.W."/>
            <person name="Mardis E."/>
            <person name="Waterston R."/>
            <person name="Wilson R."/>
            <person name="Emanuel B.S."/>
            <person name="Shaikh T."/>
            <person name="Kurahashi H."/>
            <person name="Saitta S."/>
            <person name="Budarf M.L."/>
            <person name="McDermid H.E."/>
            <person name="Johnson A."/>
            <person name="Wong A.C.C."/>
            <person name="Morrow B.E."/>
            <person name="Edelmann L."/>
            <person name="Kim U.J."/>
            <person name="Shizuya H."/>
            <person name="Simon M.I."/>
            <person name="Dumanski J.P."/>
            <person name="Peyrard M."/>
            <person name="Kedra D."/>
            <person name="Seroussi E."/>
            <person name="Fransson I."/>
            <person name="Tapia I."/>
            <person name="Bruder C.E."/>
            <person name="O'Brien K.P."/>
            <person name="Wilkinson P."/>
            <person name="Bodenteich A."/>
            <person name="Hartman K."/>
            <person name="Hu X."/>
            <person name="Khan A.S."/>
            <person name="Lane L."/>
            <person name="Tilahun Y."/>
            <person name="Wright H."/>
        </authorList>
    </citation>
    <scope>NUCLEOTIDE SEQUENCE [LARGE SCALE GENOMIC DNA]</scope>
</reference>
<reference key="7">
    <citation type="journal article" date="2007" name="BMC Genomics">
        <title>The full-ORF clone resource of the German cDNA consortium.</title>
        <authorList>
            <person name="Bechtel S."/>
            <person name="Rosenfelder H."/>
            <person name="Duda A."/>
            <person name="Schmidt C.P."/>
            <person name="Ernst U."/>
            <person name="Wellenreuther R."/>
            <person name="Mehrle A."/>
            <person name="Schuster C."/>
            <person name="Bahr A."/>
            <person name="Bloecker H."/>
            <person name="Heubner D."/>
            <person name="Hoerlein A."/>
            <person name="Michel G."/>
            <person name="Wedler H."/>
            <person name="Koehrer K."/>
            <person name="Ottenwaelder B."/>
            <person name="Poustka A."/>
            <person name="Wiemann S."/>
            <person name="Schupp I."/>
        </authorList>
    </citation>
    <scope>NUCLEOTIDE SEQUENCE [LARGE SCALE MRNA] OF 195-931</scope>
    <scope>VARIANT GLY-648</scope>
    <source>
        <tissue>Testis</tissue>
    </source>
</reference>
<reference key="8">
    <citation type="journal article" date="2003" name="J. Biol. Chem.">
        <title>Megakaryoblastic leukemia-1/2, a transcriptional co-activator of serum response factor, is required for skeletal myogenic differentiation.</title>
        <authorList>
            <person name="Selvaraj A."/>
            <person name="Prywes R."/>
        </authorList>
    </citation>
    <scope>INTERACTION WITH MRTFB AND SRF</scope>
    <source>
        <tissue>Cervix carcinoma</tissue>
    </source>
</reference>
<reference key="9">
    <citation type="journal article" date="2006" name="Cell">
        <title>Global, in vivo, and site-specific phosphorylation dynamics in signaling networks.</title>
        <authorList>
            <person name="Olsen J.V."/>
            <person name="Blagoev B."/>
            <person name="Gnad F."/>
            <person name="Macek B."/>
            <person name="Kumar C."/>
            <person name="Mortensen P."/>
            <person name="Mann M."/>
        </authorList>
    </citation>
    <scope>PHOSPHORYLATION [LARGE SCALE ANALYSIS] AT SER-6</scope>
    <scope>IDENTIFICATION BY MASS SPECTROMETRY [LARGE SCALE ANALYSIS]</scope>
    <source>
        <tissue>Cervix carcinoma</tissue>
    </source>
</reference>
<reference key="10">
    <citation type="journal article" date="2008" name="Proc. Natl. Acad. Sci. U.S.A.">
        <title>A quantitative atlas of mitotic phosphorylation.</title>
        <authorList>
            <person name="Dephoure N."/>
            <person name="Zhou C."/>
            <person name="Villen J."/>
            <person name="Beausoleil S.A."/>
            <person name="Bakalarski C.E."/>
            <person name="Elledge S.J."/>
            <person name="Gygi S.P."/>
        </authorList>
    </citation>
    <scope>PHOSPHORYLATION [LARGE SCALE ANALYSIS] AT THR-305 AND THR-450</scope>
    <scope>IDENTIFICATION BY MASS SPECTROMETRY [LARGE SCALE ANALYSIS]</scope>
    <source>
        <tissue>Cervix carcinoma</tissue>
    </source>
</reference>
<reference key="11">
    <citation type="journal article" date="2009" name="Anal. Chem.">
        <title>Lys-N and trypsin cover complementary parts of the phosphoproteome in a refined SCX-based approach.</title>
        <authorList>
            <person name="Gauci S."/>
            <person name="Helbig A.O."/>
            <person name="Slijper M."/>
            <person name="Krijgsveld J."/>
            <person name="Heck A.J."/>
            <person name="Mohammed S."/>
        </authorList>
    </citation>
    <scope>IDENTIFICATION BY MASS SPECTROMETRY [LARGE SCALE ANALYSIS]</scope>
</reference>
<reference key="12">
    <citation type="journal article" date="2009" name="Nat. Cell Biol.">
        <title>SCAI acts as a suppressor of cancer cell invasion through the transcriptional control of beta1-integrin.</title>
        <authorList>
            <person name="Brandt D.T."/>
            <person name="Baarlink C."/>
            <person name="Kitzing T.M."/>
            <person name="Kremmer E."/>
            <person name="Ivaska J."/>
            <person name="Nollau P."/>
            <person name="Grosse R."/>
        </authorList>
    </citation>
    <scope>INTERACTION WITH SCAI AND SRF</scope>
    <scope>SUBCELLULAR LOCATION</scope>
</reference>
<reference key="13">
    <citation type="journal article" date="2009" name="Sci. Signal.">
        <title>Quantitative phosphoproteomic analysis of T cell receptor signaling reveals system-wide modulation of protein-protein interactions.</title>
        <authorList>
            <person name="Mayya V."/>
            <person name="Lundgren D.H."/>
            <person name="Hwang S.-I."/>
            <person name="Rezaul K."/>
            <person name="Wu L."/>
            <person name="Eng J.K."/>
            <person name="Rodionov V."/>
            <person name="Han D.K."/>
        </authorList>
    </citation>
    <scope>IDENTIFICATION BY MASS SPECTROMETRY [LARGE SCALE ANALYSIS]</scope>
    <source>
        <tissue>Leukemic T-cell</tissue>
    </source>
</reference>
<reference key="14">
    <citation type="journal article" date="2010" name="Sci. Signal.">
        <title>Quantitative phosphoproteomics reveals widespread full phosphorylation site occupancy during mitosis.</title>
        <authorList>
            <person name="Olsen J.V."/>
            <person name="Vermeulen M."/>
            <person name="Santamaria A."/>
            <person name="Kumar C."/>
            <person name="Miller M.L."/>
            <person name="Jensen L.J."/>
            <person name="Gnad F."/>
            <person name="Cox J."/>
            <person name="Jensen T.S."/>
            <person name="Nigg E.A."/>
            <person name="Brunak S."/>
            <person name="Mann M."/>
        </authorList>
    </citation>
    <scope>PHOSPHORYLATION [LARGE SCALE ANALYSIS] AT THR-450 AND SER-454</scope>
    <scope>IDENTIFICATION BY MASS SPECTROMETRY [LARGE SCALE ANALYSIS]</scope>
    <source>
        <tissue>Cervix carcinoma</tissue>
    </source>
</reference>
<reference key="15">
    <citation type="journal article" date="2011" name="Sci. Signal.">
        <title>System-wide temporal characterization of the proteome and phosphoproteome of human embryonic stem cell differentiation.</title>
        <authorList>
            <person name="Rigbolt K.T."/>
            <person name="Prokhorova T.A."/>
            <person name="Akimov V."/>
            <person name="Henningsen J."/>
            <person name="Johansen P.T."/>
            <person name="Kratchmarova I."/>
            <person name="Kassem M."/>
            <person name="Mann M."/>
            <person name="Olsen J.V."/>
            <person name="Blagoev B."/>
        </authorList>
    </citation>
    <scope>PHOSPHORYLATION [LARGE SCALE ANALYSIS] AT SER-6; THR-450 AND SER-454</scope>
    <scope>IDENTIFICATION BY MASS SPECTROMETRY [LARGE SCALE ANALYSIS]</scope>
</reference>
<reference key="16">
    <citation type="journal article" date="2013" name="J. Proteome Res.">
        <title>Toward a comprehensive characterization of a human cancer cell phosphoproteome.</title>
        <authorList>
            <person name="Zhou H."/>
            <person name="Di Palma S."/>
            <person name="Preisinger C."/>
            <person name="Peng M."/>
            <person name="Polat A.N."/>
            <person name="Heck A.J."/>
            <person name="Mohammed S."/>
        </authorList>
    </citation>
    <scope>PHOSPHORYLATION [LARGE SCALE ANALYSIS] AT SER-156; SER-333; SER-385 AND THR-450</scope>
    <scope>IDENTIFICATION BY MASS SPECTROMETRY [LARGE SCALE ANALYSIS]</scope>
    <source>
        <tissue>Cervix carcinoma</tissue>
        <tissue>Erythroleukemia</tissue>
    </source>
</reference>
<reference key="17">
    <citation type="journal article" date="2014" name="Cell">
        <title>Redox modification of nuclear actin by MICAL-2 regulates SRF signaling.</title>
        <authorList>
            <person name="Lundquist M.R."/>
            <person name="Storaska A.J."/>
            <person name="Liu T.C."/>
            <person name="Larsen S.D."/>
            <person name="Evans T."/>
            <person name="Neubig R.R."/>
            <person name="Jaffrey S.R."/>
        </authorList>
    </citation>
    <scope>SUBCELLULAR LOCATION</scope>
</reference>
<reference key="18">
    <citation type="journal article" date="2014" name="J. Proteomics">
        <title>An enzyme assisted RP-RPLC approach for in-depth analysis of human liver phosphoproteome.</title>
        <authorList>
            <person name="Bian Y."/>
            <person name="Song C."/>
            <person name="Cheng K."/>
            <person name="Dong M."/>
            <person name="Wang F."/>
            <person name="Huang J."/>
            <person name="Sun D."/>
            <person name="Wang L."/>
            <person name="Ye M."/>
            <person name="Zou H."/>
        </authorList>
    </citation>
    <scope>PHOSPHORYLATION [LARGE SCALE ANALYSIS] AT SER-385</scope>
    <scope>IDENTIFICATION BY MASS SPECTROMETRY [LARGE SCALE ANALYSIS]</scope>
    <source>
        <tissue>Liver</tissue>
    </source>
</reference>
<reference key="19">
    <citation type="submission" date="2010-06" db="PDB data bank">
        <title>Northeast structural genomics consortium target HR4547E.</title>
        <authorList>
            <consortium name="Northeast structural genomics consortium (NESG)"/>
        </authorList>
    </citation>
    <scope>STRUCTURE BY NMR OF 336-396</scope>
</reference>
<reference key="20">
    <citation type="journal article" date="2015" name="Blood">
        <title>Immunodeficiency and severe susceptibility to bacterial infection associated with a loss-of-function homozygous mutation of MKL1.</title>
        <authorList>
            <person name="Record J."/>
            <person name="Malinova D."/>
            <person name="Zenner H.L."/>
            <person name="Plagnol V."/>
            <person name="Nowak K."/>
            <person name="Syed F."/>
            <person name="Bouma G."/>
            <person name="Curtis J."/>
            <person name="Gilmour K."/>
            <person name="Cale C."/>
            <person name="Hackett S."/>
            <person name="Charras G."/>
            <person name="Moulding D."/>
            <person name="Nejentsev S."/>
            <person name="Thrasher A.J."/>
            <person name="Burns S.O."/>
        </authorList>
    </citation>
    <scope>FUNCTION</scope>
    <scope>INVOLVEMENT IN IMD66</scope>
    <scope>VARIANT IMD66 723-LYS--LEU-931 DEL</scope>
    <scope>CHARACTERIZATION OF VARIANT IMD66 723-LYS--LEU-931 DEL</scope>
    <scope>TISSUE SPECIFICITY</scope>
</reference>
<proteinExistence type="evidence at protein level"/>